<protein>
    <recommendedName>
        <fullName evidence="1">Nucleoid-associated protein P9515_00191</fullName>
    </recommendedName>
</protein>
<organism>
    <name type="scientific">Prochlorococcus marinus (strain MIT 9515)</name>
    <dbReference type="NCBI Taxonomy" id="167542"/>
    <lineage>
        <taxon>Bacteria</taxon>
        <taxon>Bacillati</taxon>
        <taxon>Cyanobacteriota</taxon>
        <taxon>Cyanophyceae</taxon>
        <taxon>Synechococcales</taxon>
        <taxon>Prochlorococcaceae</taxon>
        <taxon>Prochlorococcus</taxon>
    </lineage>
</organism>
<gene>
    <name type="ordered locus">P9515_00191</name>
</gene>
<sequence length="116" mass="12978">MAGFGLPNFGQLTEAFKKAKEIQQNAQKLQDELESMEIEGKSDDEMIKVWISGNQLPLRVEVKDTIAESNKEEIEKNILEAIKKAHETSTTTMKERMNDLTGGLNLNLPGLDNNDS</sequence>
<keyword id="KW-0963">Cytoplasm</keyword>
<keyword id="KW-0238">DNA-binding</keyword>
<feature type="chain" id="PRO_1000003795" description="Nucleoid-associated protein P9515_00191">
    <location>
        <begin position="1"/>
        <end position="116"/>
    </location>
</feature>
<feature type="region of interest" description="Disordered" evidence="2">
    <location>
        <begin position="89"/>
        <end position="116"/>
    </location>
</feature>
<feature type="compositionally biased region" description="Basic and acidic residues" evidence="2">
    <location>
        <begin position="89"/>
        <end position="98"/>
    </location>
</feature>
<feature type="compositionally biased region" description="Low complexity" evidence="2">
    <location>
        <begin position="99"/>
        <end position="116"/>
    </location>
</feature>
<evidence type="ECO:0000255" key="1">
    <source>
        <dbReference type="HAMAP-Rule" id="MF_00274"/>
    </source>
</evidence>
<evidence type="ECO:0000256" key="2">
    <source>
        <dbReference type="SAM" id="MobiDB-lite"/>
    </source>
</evidence>
<reference key="1">
    <citation type="journal article" date="2007" name="PLoS Genet.">
        <title>Patterns and implications of gene gain and loss in the evolution of Prochlorococcus.</title>
        <authorList>
            <person name="Kettler G.C."/>
            <person name="Martiny A.C."/>
            <person name="Huang K."/>
            <person name="Zucker J."/>
            <person name="Coleman M.L."/>
            <person name="Rodrigue S."/>
            <person name="Chen F."/>
            <person name="Lapidus A."/>
            <person name="Ferriera S."/>
            <person name="Johnson J."/>
            <person name="Steglich C."/>
            <person name="Church G.M."/>
            <person name="Richardson P."/>
            <person name="Chisholm S.W."/>
        </authorList>
    </citation>
    <scope>NUCLEOTIDE SEQUENCE [LARGE SCALE GENOMIC DNA]</scope>
    <source>
        <strain>MIT 9515</strain>
    </source>
</reference>
<proteinExistence type="inferred from homology"/>
<name>Y019_PROM5</name>
<dbReference type="EMBL" id="CP000552">
    <property type="protein sequence ID" value="ABM71228.1"/>
    <property type="molecule type" value="Genomic_DNA"/>
</dbReference>
<dbReference type="RefSeq" id="WP_011819345.1">
    <property type="nucleotide sequence ID" value="NC_008817.1"/>
</dbReference>
<dbReference type="SMR" id="A2BTV8"/>
<dbReference type="STRING" id="167542.P9515_00191"/>
<dbReference type="GeneID" id="60201925"/>
<dbReference type="KEGG" id="pmc:P9515_00191"/>
<dbReference type="eggNOG" id="COG0718">
    <property type="taxonomic scope" value="Bacteria"/>
</dbReference>
<dbReference type="HOGENOM" id="CLU_140930_0_1_3"/>
<dbReference type="OrthoDB" id="487780at2"/>
<dbReference type="Proteomes" id="UP000001589">
    <property type="component" value="Chromosome"/>
</dbReference>
<dbReference type="GO" id="GO:0043590">
    <property type="term" value="C:bacterial nucleoid"/>
    <property type="evidence" value="ECO:0007669"/>
    <property type="project" value="UniProtKB-UniRule"/>
</dbReference>
<dbReference type="GO" id="GO:0005829">
    <property type="term" value="C:cytosol"/>
    <property type="evidence" value="ECO:0007669"/>
    <property type="project" value="TreeGrafter"/>
</dbReference>
<dbReference type="GO" id="GO:0003677">
    <property type="term" value="F:DNA binding"/>
    <property type="evidence" value="ECO:0007669"/>
    <property type="project" value="UniProtKB-UniRule"/>
</dbReference>
<dbReference type="Gene3D" id="3.30.1310.10">
    <property type="entry name" value="Nucleoid-associated protein YbaB-like domain"/>
    <property type="match status" value="1"/>
</dbReference>
<dbReference type="HAMAP" id="MF_00274">
    <property type="entry name" value="DNA_YbaB_EbfC"/>
    <property type="match status" value="1"/>
</dbReference>
<dbReference type="InterPro" id="IPR036894">
    <property type="entry name" value="YbaB-like_sf"/>
</dbReference>
<dbReference type="InterPro" id="IPR004401">
    <property type="entry name" value="YbaB/EbfC"/>
</dbReference>
<dbReference type="NCBIfam" id="TIGR00103">
    <property type="entry name" value="DNA_YbaB_EbfC"/>
    <property type="match status" value="1"/>
</dbReference>
<dbReference type="PANTHER" id="PTHR33449">
    <property type="entry name" value="NUCLEOID-ASSOCIATED PROTEIN YBAB"/>
    <property type="match status" value="1"/>
</dbReference>
<dbReference type="PANTHER" id="PTHR33449:SF1">
    <property type="entry name" value="NUCLEOID-ASSOCIATED PROTEIN YBAB"/>
    <property type="match status" value="1"/>
</dbReference>
<dbReference type="Pfam" id="PF02575">
    <property type="entry name" value="YbaB_DNA_bd"/>
    <property type="match status" value="1"/>
</dbReference>
<dbReference type="PIRSF" id="PIRSF004555">
    <property type="entry name" value="UCP004555"/>
    <property type="match status" value="1"/>
</dbReference>
<dbReference type="SUPFAM" id="SSF82607">
    <property type="entry name" value="YbaB-like"/>
    <property type="match status" value="1"/>
</dbReference>
<accession>A2BTV8</accession>
<comment type="function">
    <text evidence="1">Binds to DNA and alters its conformation. May be involved in regulation of gene expression, nucleoid organization and DNA protection.</text>
</comment>
<comment type="subunit">
    <text evidence="1">Homodimer.</text>
</comment>
<comment type="subcellular location">
    <subcellularLocation>
        <location evidence="1">Cytoplasm</location>
        <location evidence="1">Nucleoid</location>
    </subcellularLocation>
</comment>
<comment type="similarity">
    <text evidence="1">Belongs to the YbaB/EbfC family.</text>
</comment>